<comment type="function">
    <text evidence="1">Stabilizer subunit of the dolichol-phosphate-mannose synthase complex.</text>
</comment>
<comment type="pathway">
    <text>Protein modification; protein glycosylation.</text>
</comment>
<comment type="subcellular location">
    <subcellularLocation>
        <location evidence="1">Endoplasmic reticulum membrane</location>
        <topology evidence="1">Multi-pass membrane protein</topology>
    </subcellularLocation>
</comment>
<comment type="similarity">
    <text evidence="3">Belongs to the DPM3 family.</text>
</comment>
<proteinExistence type="inferred from homology"/>
<sequence length="95" mass="10786">MVSQLVTYSAHVILFVLVWLLAYTDVVPVLSYLPECLHCLVNYAPFFAVLFLGIYAVFNVVYGVATFNDCAEAKVELLGEIKEAREELKRKRIID</sequence>
<organism>
    <name type="scientific">Caenorhabditis elegans</name>
    <dbReference type="NCBI Taxonomy" id="6239"/>
    <lineage>
        <taxon>Eukaryota</taxon>
        <taxon>Metazoa</taxon>
        <taxon>Ecdysozoa</taxon>
        <taxon>Nematoda</taxon>
        <taxon>Chromadorea</taxon>
        <taxon>Rhabditida</taxon>
        <taxon>Rhabditina</taxon>
        <taxon>Rhabditomorpha</taxon>
        <taxon>Rhabditoidea</taxon>
        <taxon>Rhabditidae</taxon>
        <taxon>Peloderinae</taxon>
        <taxon>Caenorhabditis</taxon>
    </lineage>
</organism>
<keyword id="KW-0256">Endoplasmic reticulum</keyword>
<keyword id="KW-0472">Membrane</keyword>
<keyword id="KW-1185">Reference proteome</keyword>
<keyword id="KW-0812">Transmembrane</keyword>
<keyword id="KW-1133">Transmembrane helix</keyword>
<dbReference type="EMBL" id="Z70684">
    <property type="protein sequence ID" value="CAA94605.1"/>
    <property type="molecule type" value="Genomic_DNA"/>
</dbReference>
<dbReference type="PIR" id="T21500">
    <property type="entry name" value="T21500"/>
</dbReference>
<dbReference type="RefSeq" id="NP_502366.1">
    <property type="nucleotide sequence ID" value="NM_069965.4"/>
</dbReference>
<dbReference type="SMR" id="Q9XVV5"/>
<dbReference type="FunCoup" id="Q9XVV5">
    <property type="interactions" value="252"/>
</dbReference>
<dbReference type="STRING" id="6239.F28D1.11.1"/>
<dbReference type="PaxDb" id="6239-F28D1.11"/>
<dbReference type="PeptideAtlas" id="Q9XVV5"/>
<dbReference type="EnsemblMetazoa" id="F28D1.11.1">
    <property type="protein sequence ID" value="F28D1.11.1"/>
    <property type="gene ID" value="WBGene00009219"/>
</dbReference>
<dbReference type="GeneID" id="178189"/>
<dbReference type="KEGG" id="cel:CELE_F28D1.11"/>
<dbReference type="AGR" id="WB:WBGene00009219"/>
<dbReference type="CTD" id="178189"/>
<dbReference type="WormBase" id="F28D1.11">
    <property type="protein sequence ID" value="CE20732"/>
    <property type="gene ID" value="WBGene00009219"/>
    <property type="gene designation" value="dpm-3"/>
</dbReference>
<dbReference type="eggNOG" id="KOG4841">
    <property type="taxonomic scope" value="Eukaryota"/>
</dbReference>
<dbReference type="GeneTree" id="ENSGT00390000008892"/>
<dbReference type="HOGENOM" id="CLU_150782_0_0_1"/>
<dbReference type="InParanoid" id="Q9XVV5"/>
<dbReference type="OMA" id="FNDCAEA"/>
<dbReference type="OrthoDB" id="2014333at2759"/>
<dbReference type="PhylomeDB" id="Q9XVV5"/>
<dbReference type="UniPathway" id="UPA00378"/>
<dbReference type="PRO" id="PR:Q9XVV5"/>
<dbReference type="Proteomes" id="UP000001940">
    <property type="component" value="Chromosome IV"/>
</dbReference>
<dbReference type="Bgee" id="WBGene00009219">
    <property type="expression patterns" value="Expressed in germ line (C elegans) and 4 other cell types or tissues"/>
</dbReference>
<dbReference type="GO" id="GO:0033185">
    <property type="term" value="C:dolichol-phosphate-mannose synthase complex"/>
    <property type="evidence" value="ECO:0000318"/>
    <property type="project" value="GO_Central"/>
</dbReference>
<dbReference type="GO" id="GO:0005789">
    <property type="term" value="C:endoplasmic reticulum membrane"/>
    <property type="evidence" value="ECO:0000318"/>
    <property type="project" value="GO_Central"/>
</dbReference>
<dbReference type="GO" id="GO:0006506">
    <property type="term" value="P:GPI anchor biosynthetic process"/>
    <property type="evidence" value="ECO:0000318"/>
    <property type="project" value="GO_Central"/>
</dbReference>
<dbReference type="GO" id="GO:0006486">
    <property type="term" value="P:protein glycosylation"/>
    <property type="evidence" value="ECO:0007669"/>
    <property type="project" value="UniProtKB-UniPathway"/>
</dbReference>
<dbReference type="InterPro" id="IPR013174">
    <property type="entry name" value="DPM3"/>
</dbReference>
<dbReference type="PANTHER" id="PTHR16433">
    <property type="entry name" value="DOLICHOL-PHOSPHATE MANNOSYLTRANSFERASE SUBUNIT 3"/>
    <property type="match status" value="1"/>
</dbReference>
<dbReference type="PANTHER" id="PTHR16433:SF0">
    <property type="entry name" value="DOLICHOL-PHOSPHATE MANNOSYLTRANSFERASE SUBUNIT 3"/>
    <property type="match status" value="1"/>
</dbReference>
<dbReference type="Pfam" id="PF08285">
    <property type="entry name" value="DPM3"/>
    <property type="match status" value="1"/>
</dbReference>
<evidence type="ECO:0000250" key="1"/>
<evidence type="ECO:0000255" key="2"/>
<evidence type="ECO:0000305" key="3"/>
<protein>
    <recommendedName>
        <fullName>Probable dolichol-phosphate mannosyltransferase subunit 3</fullName>
    </recommendedName>
    <alternativeName>
        <fullName>Dolichol-phosphate mannose synthase subunit 3</fullName>
        <shortName>DPM synthase subunit 3</shortName>
    </alternativeName>
    <alternativeName>
        <fullName>Dolichyl-phosphate beta-D-mannosyltransferase subunit 3</fullName>
    </alternativeName>
    <alternativeName>
        <fullName>Mannose-P-dolichol synthase subunit 3</fullName>
        <shortName>MPD synthase subunit 3</shortName>
    </alternativeName>
</protein>
<name>DPM3_CAEEL</name>
<gene>
    <name type="primary">dpm-3</name>
    <name type="ORF">F28D1.11</name>
</gene>
<reference key="1">
    <citation type="journal article" date="1998" name="Science">
        <title>Genome sequence of the nematode C. elegans: a platform for investigating biology.</title>
        <authorList>
            <consortium name="The C. elegans sequencing consortium"/>
        </authorList>
    </citation>
    <scope>NUCLEOTIDE SEQUENCE [LARGE SCALE GENOMIC DNA]</scope>
    <source>
        <strain>Bristol N2</strain>
    </source>
</reference>
<feature type="chain" id="PRO_0000195002" description="Probable dolichol-phosphate mannosyltransferase subunit 3">
    <location>
        <begin position="1"/>
        <end position="95"/>
    </location>
</feature>
<feature type="transmembrane region" description="Helical" evidence="2">
    <location>
        <begin position="10"/>
        <end position="30"/>
    </location>
</feature>
<feature type="transmembrane region" description="Helical" evidence="2">
    <location>
        <begin position="44"/>
        <end position="64"/>
    </location>
</feature>
<accession>Q9XVV5</accession>